<protein>
    <recommendedName>
        <fullName evidence="1">Large ribosomal subunit protein uL15</fullName>
    </recommendedName>
    <alternativeName>
        <fullName evidence="3">50S ribosomal protein L15</fullName>
    </alternativeName>
</protein>
<sequence length="146" mass="15421">MKLHELKAAEGSRKVRNRVGRGTSSGNGKTSGRGQKGQKARSGGGVRLGFEGGQTPLFRRIPKRGFTNINTKEYALVNLDQLNVFDDGTEVTPAILKDAGIVRAEKSGVKVLGNGELTKKLTVKAAKFSKSAEAAIIAKGGSIEVI</sequence>
<keyword id="KW-0687">Ribonucleoprotein</keyword>
<keyword id="KW-0689">Ribosomal protein</keyword>
<keyword id="KW-0694">RNA-binding</keyword>
<keyword id="KW-0699">rRNA-binding</keyword>
<comment type="function">
    <text evidence="1">Binds to the 23S rRNA.</text>
</comment>
<comment type="subunit">
    <text evidence="1">Part of the 50S ribosomal subunit.</text>
</comment>
<comment type="similarity">
    <text evidence="1">Belongs to the universal ribosomal protein uL15 family.</text>
</comment>
<dbReference type="EMBL" id="CP000003">
    <property type="protein sequence ID" value="AAT86247.1"/>
    <property type="molecule type" value="Genomic_DNA"/>
</dbReference>
<dbReference type="RefSeq" id="WP_002986622.1">
    <property type="nucleotide sequence ID" value="NC_006086.1"/>
</dbReference>
<dbReference type="SMR" id="Q5XEB6"/>
<dbReference type="GeneID" id="69900045"/>
<dbReference type="KEGG" id="spa:M6_Spy0112"/>
<dbReference type="HOGENOM" id="CLU_055188_4_2_9"/>
<dbReference type="Proteomes" id="UP000001167">
    <property type="component" value="Chromosome"/>
</dbReference>
<dbReference type="GO" id="GO:0022625">
    <property type="term" value="C:cytosolic large ribosomal subunit"/>
    <property type="evidence" value="ECO:0007669"/>
    <property type="project" value="TreeGrafter"/>
</dbReference>
<dbReference type="GO" id="GO:0019843">
    <property type="term" value="F:rRNA binding"/>
    <property type="evidence" value="ECO:0007669"/>
    <property type="project" value="UniProtKB-UniRule"/>
</dbReference>
<dbReference type="GO" id="GO:0003735">
    <property type="term" value="F:structural constituent of ribosome"/>
    <property type="evidence" value="ECO:0007669"/>
    <property type="project" value="InterPro"/>
</dbReference>
<dbReference type="GO" id="GO:0006412">
    <property type="term" value="P:translation"/>
    <property type="evidence" value="ECO:0007669"/>
    <property type="project" value="UniProtKB-UniRule"/>
</dbReference>
<dbReference type="Gene3D" id="3.100.10.10">
    <property type="match status" value="1"/>
</dbReference>
<dbReference type="HAMAP" id="MF_01341">
    <property type="entry name" value="Ribosomal_uL15"/>
    <property type="match status" value="1"/>
</dbReference>
<dbReference type="InterPro" id="IPR030878">
    <property type="entry name" value="Ribosomal_uL15"/>
</dbReference>
<dbReference type="InterPro" id="IPR021131">
    <property type="entry name" value="Ribosomal_uL15/eL18"/>
</dbReference>
<dbReference type="InterPro" id="IPR036227">
    <property type="entry name" value="Ribosomal_uL15/eL18_sf"/>
</dbReference>
<dbReference type="InterPro" id="IPR005749">
    <property type="entry name" value="Ribosomal_uL15_bac-type"/>
</dbReference>
<dbReference type="InterPro" id="IPR001196">
    <property type="entry name" value="Ribosomal_uL15_CS"/>
</dbReference>
<dbReference type="NCBIfam" id="TIGR01071">
    <property type="entry name" value="rplO_bact"/>
    <property type="match status" value="1"/>
</dbReference>
<dbReference type="PANTHER" id="PTHR12934">
    <property type="entry name" value="50S RIBOSOMAL PROTEIN L15"/>
    <property type="match status" value="1"/>
</dbReference>
<dbReference type="PANTHER" id="PTHR12934:SF11">
    <property type="entry name" value="LARGE RIBOSOMAL SUBUNIT PROTEIN UL15M"/>
    <property type="match status" value="1"/>
</dbReference>
<dbReference type="Pfam" id="PF00828">
    <property type="entry name" value="Ribosomal_L27A"/>
    <property type="match status" value="1"/>
</dbReference>
<dbReference type="SUPFAM" id="SSF52080">
    <property type="entry name" value="Ribosomal proteins L15p and L18e"/>
    <property type="match status" value="1"/>
</dbReference>
<dbReference type="PROSITE" id="PS00475">
    <property type="entry name" value="RIBOSOMAL_L15"/>
    <property type="match status" value="1"/>
</dbReference>
<accession>Q5XEB6</accession>
<evidence type="ECO:0000255" key="1">
    <source>
        <dbReference type="HAMAP-Rule" id="MF_01341"/>
    </source>
</evidence>
<evidence type="ECO:0000256" key="2">
    <source>
        <dbReference type="SAM" id="MobiDB-lite"/>
    </source>
</evidence>
<evidence type="ECO:0000305" key="3"/>
<name>RL15_STRP6</name>
<gene>
    <name evidence="1" type="primary">rplO</name>
    <name type="ordered locus">M6_Spy0112</name>
</gene>
<feature type="chain" id="PRO_0000104828" description="Large ribosomal subunit protein uL15">
    <location>
        <begin position="1"/>
        <end position="146"/>
    </location>
</feature>
<feature type="region of interest" description="Disordered" evidence="2">
    <location>
        <begin position="1"/>
        <end position="51"/>
    </location>
</feature>
<feature type="compositionally biased region" description="Basic and acidic residues" evidence="2">
    <location>
        <begin position="1"/>
        <end position="13"/>
    </location>
</feature>
<feature type="compositionally biased region" description="Gly residues" evidence="2">
    <location>
        <begin position="23"/>
        <end position="35"/>
    </location>
</feature>
<feature type="compositionally biased region" description="Gly residues" evidence="2">
    <location>
        <begin position="42"/>
        <end position="51"/>
    </location>
</feature>
<proteinExistence type="inferred from homology"/>
<reference key="1">
    <citation type="journal article" date="2004" name="J. Infect. Dis.">
        <title>Progress toward characterization of the group A Streptococcus metagenome: complete genome sequence of a macrolide-resistant serotype M6 strain.</title>
        <authorList>
            <person name="Banks D.J."/>
            <person name="Porcella S.F."/>
            <person name="Barbian K.D."/>
            <person name="Beres S.B."/>
            <person name="Philips L.E."/>
            <person name="Voyich J.M."/>
            <person name="DeLeo F.R."/>
            <person name="Martin J.M."/>
            <person name="Somerville G.A."/>
            <person name="Musser J.M."/>
        </authorList>
    </citation>
    <scope>NUCLEOTIDE SEQUENCE [LARGE SCALE GENOMIC DNA]</scope>
    <source>
        <strain>ATCC BAA-946 / MGAS10394</strain>
    </source>
</reference>
<organism>
    <name type="scientific">Streptococcus pyogenes serotype M6 (strain ATCC BAA-946 / MGAS10394)</name>
    <dbReference type="NCBI Taxonomy" id="286636"/>
    <lineage>
        <taxon>Bacteria</taxon>
        <taxon>Bacillati</taxon>
        <taxon>Bacillota</taxon>
        <taxon>Bacilli</taxon>
        <taxon>Lactobacillales</taxon>
        <taxon>Streptococcaceae</taxon>
        <taxon>Streptococcus</taxon>
    </lineage>
</organism>